<dbReference type="EC" id="6.3.4.23" evidence="2"/>
<dbReference type="EMBL" id="CP000609">
    <property type="protein sequence ID" value="ABO34521.1"/>
    <property type="molecule type" value="Genomic_DNA"/>
</dbReference>
<dbReference type="RefSeq" id="WP_011867979.1">
    <property type="nucleotide sequence ID" value="NC_009135.1"/>
</dbReference>
<dbReference type="SMR" id="A4FWE6"/>
<dbReference type="STRING" id="402880.MmarC5_0205"/>
<dbReference type="GeneID" id="4928183"/>
<dbReference type="KEGG" id="mmq:MmarC5_0205"/>
<dbReference type="eggNOG" id="arCOG04346">
    <property type="taxonomic scope" value="Archaea"/>
</dbReference>
<dbReference type="HOGENOM" id="CLU_065084_0_0_2"/>
<dbReference type="OrthoDB" id="98133at2157"/>
<dbReference type="UniPathway" id="UPA00074">
    <property type="reaction ID" value="UER00134"/>
</dbReference>
<dbReference type="Proteomes" id="UP000000253">
    <property type="component" value="Chromosome"/>
</dbReference>
<dbReference type="GO" id="GO:0005524">
    <property type="term" value="F:ATP binding"/>
    <property type="evidence" value="ECO:0007669"/>
    <property type="project" value="UniProtKB-KW"/>
</dbReference>
<dbReference type="GO" id="GO:0016879">
    <property type="term" value="F:ligase activity, forming carbon-nitrogen bonds"/>
    <property type="evidence" value="ECO:0007669"/>
    <property type="project" value="UniProtKB-UniRule"/>
</dbReference>
<dbReference type="GO" id="GO:0000287">
    <property type="term" value="F:magnesium ion binding"/>
    <property type="evidence" value="ECO:0007669"/>
    <property type="project" value="InterPro"/>
</dbReference>
<dbReference type="GO" id="GO:0006189">
    <property type="term" value="P:'de novo' IMP biosynthetic process"/>
    <property type="evidence" value="ECO:0007669"/>
    <property type="project" value="UniProtKB-UniRule"/>
</dbReference>
<dbReference type="Gene3D" id="3.40.50.20">
    <property type="match status" value="1"/>
</dbReference>
<dbReference type="Gene3D" id="3.30.1490.20">
    <property type="entry name" value="ATP-grasp fold, A domain"/>
    <property type="match status" value="1"/>
</dbReference>
<dbReference type="Gene3D" id="3.30.470.20">
    <property type="entry name" value="ATP-grasp fold, B domain"/>
    <property type="match status" value="1"/>
</dbReference>
<dbReference type="HAMAP" id="MF_01163">
    <property type="entry name" value="IMP_biosynth_PurP"/>
    <property type="match status" value="1"/>
</dbReference>
<dbReference type="InterPro" id="IPR013815">
    <property type="entry name" value="ATP_grasp_subdomain_1"/>
</dbReference>
<dbReference type="InterPro" id="IPR023656">
    <property type="entry name" value="IMP_biosynth_PurP"/>
</dbReference>
<dbReference type="InterPro" id="IPR009720">
    <property type="entry name" value="IMP_biosynth_PurP_C"/>
</dbReference>
<dbReference type="InterPro" id="IPR010672">
    <property type="entry name" value="IMP_biosynth_PurP_N"/>
</dbReference>
<dbReference type="InterPro" id="IPR016185">
    <property type="entry name" value="PreATP-grasp_dom_sf"/>
</dbReference>
<dbReference type="NCBIfam" id="NF009780">
    <property type="entry name" value="PRK13278.1-5"/>
    <property type="match status" value="1"/>
</dbReference>
<dbReference type="PANTHER" id="PTHR38147:SF2">
    <property type="entry name" value="5-FORMAMINOIMIDAZOLE-4-CARBOXAMIDE-1-(BETA)-D-RIBOFURANOSYL 5'-MONOPHOSPHATE SYNTHETASE"/>
    <property type="match status" value="1"/>
</dbReference>
<dbReference type="PANTHER" id="PTHR38147">
    <property type="entry name" value="5-FORMAMINOIMIDAZOLE-4-CARBOXAMIDE-1-(BETA)-D-RIBOFURANOSYL 5'-MONOPHOSPHATE SYNTHETASE-RELATED"/>
    <property type="match status" value="1"/>
</dbReference>
<dbReference type="Pfam" id="PF06849">
    <property type="entry name" value="DUF1246"/>
    <property type="match status" value="1"/>
</dbReference>
<dbReference type="Pfam" id="PF06973">
    <property type="entry name" value="DUF1297"/>
    <property type="match status" value="1"/>
</dbReference>
<dbReference type="PIRSF" id="PIRSF004602">
    <property type="entry name" value="ATPgrasp_PurP"/>
    <property type="match status" value="1"/>
</dbReference>
<dbReference type="SUPFAM" id="SSF56059">
    <property type="entry name" value="Glutathione synthetase ATP-binding domain-like"/>
    <property type="match status" value="1"/>
</dbReference>
<dbReference type="SUPFAM" id="SSF52440">
    <property type="entry name" value="PreATP-grasp domain"/>
    <property type="match status" value="1"/>
</dbReference>
<proteinExistence type="inferred from homology"/>
<keyword id="KW-0067">ATP-binding</keyword>
<keyword id="KW-0436">Ligase</keyword>
<keyword id="KW-0460">Magnesium</keyword>
<keyword id="KW-0464">Manganese</keyword>
<keyword id="KW-0479">Metal-binding</keyword>
<keyword id="KW-0547">Nucleotide-binding</keyword>
<keyword id="KW-0658">Purine biosynthesis</keyword>
<gene>
    <name evidence="2" type="primary">purP</name>
    <name type="ordered locus">MmarC5_0205</name>
</gene>
<protein>
    <recommendedName>
        <fullName evidence="2">5-formaminoimidazole-4-carboxamide-1-(beta)-D-ribofuranosyl 5'-monophosphate synthetase</fullName>
        <ecNumber evidence="2">6.3.4.23</ecNumber>
    </recommendedName>
    <alternativeName>
        <fullName evidence="2">5-aminoimidazole-4-carboxamide-1-beta-D-ribofuranosyl 5'-monophosphate--formate ligase</fullName>
    </alternativeName>
</protein>
<organism>
    <name type="scientific">Methanococcus maripaludis (strain C5 / ATCC BAA-1333)</name>
    <dbReference type="NCBI Taxonomy" id="402880"/>
    <lineage>
        <taxon>Archaea</taxon>
        <taxon>Methanobacteriati</taxon>
        <taxon>Methanobacteriota</taxon>
        <taxon>Methanomada group</taxon>
        <taxon>Methanococci</taxon>
        <taxon>Methanococcales</taxon>
        <taxon>Methanococcaceae</taxon>
        <taxon>Methanococcus</taxon>
    </lineage>
</organism>
<evidence type="ECO:0000250" key="1"/>
<evidence type="ECO:0000255" key="2">
    <source>
        <dbReference type="HAMAP-Rule" id="MF_01163"/>
    </source>
</evidence>
<sequence>MIPKEEIMGIFEKYNKDEVTIVTVGSHTSLHILKGAKLEGFSTAVITTKDRAIPYKRFGVADKFIYVDQFSDISKEEIQQQLRDMNAIIVPHGSFIAYCGLDNVEDSFKVPMFGNRAILRWEAERDLEGQLLGESGLRIPKKYGGPDDIDGPVMVKFPGARGGRGYFPCSTVEEFWRKIAEFKAKGILTEDDVKKAHIEEYVVGANYCIHYFYSPLKDQVELMGIDRRYESSIDGLVRVPAKDQLELNVDPSYVITGNFPVVIRESLLPQVFDIGDKLSAKSKELVKPGMLGPFCLQSLCNDNLELVVFEMSARVDGGTNTFMNGSPYSCLYTGEPLSMGQRIAKEIKLALELGMIDKVLS</sequence>
<reference key="1">
    <citation type="submission" date="2007-03" db="EMBL/GenBank/DDBJ databases">
        <title>Complete sequence of chromosome of Methanococcus maripaludis C5.</title>
        <authorList>
            <consortium name="US DOE Joint Genome Institute"/>
            <person name="Copeland A."/>
            <person name="Lucas S."/>
            <person name="Lapidus A."/>
            <person name="Barry K."/>
            <person name="Glavina del Rio T."/>
            <person name="Dalin E."/>
            <person name="Tice H."/>
            <person name="Pitluck S."/>
            <person name="Chertkov O."/>
            <person name="Brettin T."/>
            <person name="Bruce D."/>
            <person name="Han C."/>
            <person name="Detter J.C."/>
            <person name="Schmutz J."/>
            <person name="Larimer F."/>
            <person name="Land M."/>
            <person name="Hauser L."/>
            <person name="Kyrpides N."/>
            <person name="Mikhailova N."/>
            <person name="Sieprawska-Lupa M."/>
            <person name="Whitman W.B."/>
            <person name="Richardson P."/>
        </authorList>
    </citation>
    <scope>NUCLEOTIDE SEQUENCE [LARGE SCALE GENOMIC DNA]</scope>
    <source>
        <strain>C5 / ATCC BAA-1333</strain>
    </source>
</reference>
<accession>A4FWE6</accession>
<comment type="function">
    <text evidence="2">Catalyzes the ATP- and formate-dependent formylation of 5-aminoimidazole-4-carboxamide-1-beta-d-ribofuranosyl 5'-monophosphate (AICAR) to 5-formaminoimidazole-4-carboxamide-1-beta-d-ribofuranosyl 5'-monophosphate (FAICAR) in the absence of folates.</text>
</comment>
<comment type="catalytic activity">
    <reaction evidence="2">
        <text>5-amino-1-(5-phospho-beta-D-ribosyl)imidazole-4-carboxamide + formate + ATP = 5-formamido-1-(5-phospho-D-ribosyl)imidazole-4-carboxamide + ADP + phosphate</text>
        <dbReference type="Rhea" id="RHEA:24836"/>
        <dbReference type="ChEBI" id="CHEBI:15740"/>
        <dbReference type="ChEBI" id="CHEBI:30616"/>
        <dbReference type="ChEBI" id="CHEBI:43474"/>
        <dbReference type="ChEBI" id="CHEBI:58467"/>
        <dbReference type="ChEBI" id="CHEBI:58475"/>
        <dbReference type="ChEBI" id="CHEBI:456216"/>
        <dbReference type="EC" id="6.3.4.23"/>
    </reaction>
</comment>
<comment type="cofactor">
    <cofactor evidence="1">
        <name>Mg(2+)</name>
        <dbReference type="ChEBI" id="CHEBI:18420"/>
    </cofactor>
    <cofactor evidence="1">
        <name>Mn(2+)</name>
        <dbReference type="ChEBI" id="CHEBI:29035"/>
    </cofactor>
    <text evidence="1">Binds 1 Mg(2+) or Mn(2+) ion per subunit.</text>
</comment>
<comment type="pathway">
    <text evidence="2">Purine metabolism; IMP biosynthesis via de novo pathway; 5-formamido-1-(5-phospho-D-ribosyl)imidazole-4-carboxamide from 5-amino-1-(5-phospho-D-ribosyl)imidazole-4-carboxamide (formate route): step 1/1.</text>
</comment>
<comment type="similarity">
    <text evidence="2">Belongs to the phosphohexose mutase family.</text>
</comment>
<name>PURP_METM5</name>
<feature type="chain" id="PRO_0000348621" description="5-formaminoimidazole-4-carboxamide-1-(beta)-D-ribofuranosyl 5'-monophosphate synthetase">
    <location>
        <begin position="1"/>
        <end position="361"/>
    </location>
</feature>
<feature type="domain" description="ATP-grasp" evidence="2">
    <location>
        <begin position="116"/>
        <end position="348"/>
    </location>
</feature>
<feature type="binding site" evidence="2">
    <location>
        <position position="27"/>
    </location>
    <ligand>
        <name>5-amino-1-(5-phospho-beta-D-ribosyl)imidazole-4-carboxamide</name>
        <dbReference type="ChEBI" id="CHEBI:58475"/>
    </ligand>
</feature>
<feature type="binding site" evidence="2">
    <location>
        <position position="94"/>
    </location>
    <ligand>
        <name>5-amino-1-(5-phospho-beta-D-ribosyl)imidazole-4-carboxamide</name>
        <dbReference type="ChEBI" id="CHEBI:58475"/>
    </ligand>
</feature>
<feature type="binding site" evidence="2">
    <location>
        <begin position="146"/>
        <end position="208"/>
    </location>
    <ligand>
        <name>ATP</name>
        <dbReference type="ChEBI" id="CHEBI:30616"/>
    </ligand>
</feature>
<feature type="binding site" evidence="2">
    <location>
        <position position="230"/>
    </location>
    <ligand>
        <name>ATP</name>
        <dbReference type="ChEBI" id="CHEBI:30616"/>
    </ligand>
</feature>
<feature type="binding site" evidence="2">
    <location>
        <position position="258"/>
    </location>
    <ligand>
        <name>5-amino-1-(5-phospho-beta-D-ribosyl)imidazole-4-carboxamide</name>
        <dbReference type="ChEBI" id="CHEBI:58475"/>
    </ligand>
</feature>
<feature type="binding site" evidence="2">
    <location>
        <position position="297"/>
    </location>
    <ligand>
        <name>Mg(2+)</name>
        <dbReference type="ChEBI" id="CHEBI:18420"/>
    </ligand>
</feature>
<feature type="binding site" evidence="2">
    <location>
        <position position="310"/>
    </location>
    <ligand>
        <name>Mg(2+)</name>
        <dbReference type="ChEBI" id="CHEBI:18420"/>
    </ligand>
</feature>